<proteinExistence type="evidence at protein level"/>
<protein>
    <recommendedName>
        <fullName evidence="16">9-cis-epoxycarotenoid dioxygenase NCED1, chloroplastic</fullName>
        <shortName evidence="16">LeNCED1</shortName>
        <shortName evidence="14">SlNCED1</shortName>
        <ecNumber evidence="2">1.13.11.51</ecNumber>
    </recommendedName>
    <alternativeName>
        <fullName evidence="16">Nine-cis-epoxycarotenoid dioxygenase 1</fullName>
    </alternativeName>
</protein>
<gene>
    <name evidence="16" type="primary">NCED1</name>
    <name evidence="15" type="synonym">NCE</name>
    <name evidence="16" type="synonym">NOTABILIS</name>
    <name evidence="17" type="ordered locus">Solyc07g056570.1.1</name>
</gene>
<name>NCED1_SOLLC</name>
<keyword id="KW-0937">Abscisic acid biosynthesis</keyword>
<keyword id="KW-0938">Abscisic acid signaling pathway</keyword>
<keyword id="KW-0150">Chloroplast</keyword>
<keyword id="KW-0217">Developmental protein</keyword>
<keyword id="KW-0223">Dioxygenase</keyword>
<keyword id="KW-0292">Fruit ripening</keyword>
<keyword id="KW-0408">Iron</keyword>
<keyword id="KW-0479">Metal-binding</keyword>
<keyword id="KW-0560">Oxidoreductase</keyword>
<keyword id="KW-0934">Plastid</keyword>
<keyword id="KW-1185">Reference proteome</keyword>
<keyword id="KW-0809">Transit peptide</keyword>
<accession>O24023</accession>
<dbReference type="EC" id="1.13.11.51" evidence="2"/>
<dbReference type="EMBL" id="Z97215">
    <property type="protein sequence ID" value="CAB10168.1"/>
    <property type="molecule type" value="mRNA"/>
</dbReference>
<dbReference type="EMBL" id="AJ439079">
    <property type="protein sequence ID" value="CAD30202.1"/>
    <property type="molecule type" value="Genomic_DNA"/>
</dbReference>
<dbReference type="EMBL" id="CM001070">
    <property type="status" value="NOT_ANNOTATED_CDS"/>
    <property type="molecule type" value="Genomic_DNA"/>
</dbReference>
<dbReference type="PIR" id="T07123">
    <property type="entry name" value="T07123"/>
</dbReference>
<dbReference type="RefSeq" id="NP_001234455.1">
    <property type="nucleotide sequence ID" value="NM_001247526.2"/>
</dbReference>
<dbReference type="SMR" id="O24023"/>
<dbReference type="FunCoup" id="O24023">
    <property type="interactions" value="28"/>
</dbReference>
<dbReference type="STRING" id="4081.O24023"/>
<dbReference type="PaxDb" id="4081-Solyc07g056570.1.1"/>
<dbReference type="EnsemblPlants" id="Solyc07g056570.1.1">
    <property type="protein sequence ID" value="Solyc07g056570.1.1.1"/>
    <property type="gene ID" value="Solyc07g056570.1"/>
</dbReference>
<dbReference type="GeneID" id="544163"/>
<dbReference type="Gramene" id="Solyc07g056570.1.1">
    <property type="protein sequence ID" value="Solyc07g056570.1.1.1"/>
    <property type="gene ID" value="Solyc07g056570.1"/>
</dbReference>
<dbReference type="KEGG" id="sly:544163"/>
<dbReference type="eggNOG" id="KOG1285">
    <property type="taxonomic scope" value="Eukaryota"/>
</dbReference>
<dbReference type="HOGENOM" id="CLU_016472_0_0_1"/>
<dbReference type="InParanoid" id="O24023"/>
<dbReference type="OMA" id="KMFPEAG"/>
<dbReference type="OrthoDB" id="1069523at2759"/>
<dbReference type="PhylomeDB" id="O24023"/>
<dbReference type="UniPathway" id="UPA00090"/>
<dbReference type="Proteomes" id="UP000004994">
    <property type="component" value="Chromosome 7"/>
</dbReference>
<dbReference type="GO" id="GO:0009570">
    <property type="term" value="C:chloroplast stroma"/>
    <property type="evidence" value="ECO:0000318"/>
    <property type="project" value="GO_Central"/>
</dbReference>
<dbReference type="GO" id="GO:0045549">
    <property type="term" value="F:9-cis-epoxycarotenoid dioxygenase activity"/>
    <property type="evidence" value="ECO:0007669"/>
    <property type="project" value="UniProtKB-EC"/>
</dbReference>
<dbReference type="GO" id="GO:0010436">
    <property type="term" value="F:carotenoid dioxygenase activity"/>
    <property type="evidence" value="ECO:0000318"/>
    <property type="project" value="GO_Central"/>
</dbReference>
<dbReference type="GO" id="GO:0046872">
    <property type="term" value="F:metal ion binding"/>
    <property type="evidence" value="ECO:0007669"/>
    <property type="project" value="UniProtKB-KW"/>
</dbReference>
<dbReference type="GO" id="GO:0009688">
    <property type="term" value="P:abscisic acid biosynthetic process"/>
    <property type="evidence" value="ECO:0000315"/>
    <property type="project" value="UniProtKB"/>
</dbReference>
<dbReference type="GO" id="GO:0009738">
    <property type="term" value="P:abscisic acid-activated signaling pathway"/>
    <property type="evidence" value="ECO:0007669"/>
    <property type="project" value="UniProtKB-KW"/>
</dbReference>
<dbReference type="GO" id="GO:0048653">
    <property type="term" value="P:anther development"/>
    <property type="evidence" value="ECO:0000315"/>
    <property type="project" value="UniProtKB"/>
</dbReference>
<dbReference type="GO" id="GO:1901812">
    <property type="term" value="P:beta-carotene biosynthetic process"/>
    <property type="evidence" value="ECO:0000315"/>
    <property type="project" value="UniProtKB"/>
</dbReference>
<dbReference type="GO" id="GO:0016121">
    <property type="term" value="P:carotene catabolic process"/>
    <property type="evidence" value="ECO:0000318"/>
    <property type="project" value="GO_Central"/>
</dbReference>
<dbReference type="GO" id="GO:0009835">
    <property type="term" value="P:fruit ripening"/>
    <property type="evidence" value="ECO:0000315"/>
    <property type="project" value="UniProtKB"/>
</dbReference>
<dbReference type="GO" id="GO:1901177">
    <property type="term" value="P:lycopene biosynthetic process"/>
    <property type="evidence" value="ECO:0000315"/>
    <property type="project" value="UniProtKB"/>
</dbReference>
<dbReference type="GO" id="GO:0009555">
    <property type="term" value="P:pollen development"/>
    <property type="evidence" value="ECO:0000315"/>
    <property type="project" value="UniProtKB"/>
</dbReference>
<dbReference type="GO" id="GO:0009856">
    <property type="term" value="P:pollination"/>
    <property type="evidence" value="ECO:0000270"/>
    <property type="project" value="UniProtKB"/>
</dbReference>
<dbReference type="GO" id="GO:0009737">
    <property type="term" value="P:response to abscisic acid"/>
    <property type="evidence" value="ECO:0000270"/>
    <property type="project" value="UniProtKB"/>
</dbReference>
<dbReference type="GO" id="GO:0009733">
    <property type="term" value="P:response to auxin"/>
    <property type="evidence" value="ECO:0000270"/>
    <property type="project" value="UniProtKB"/>
</dbReference>
<dbReference type="GO" id="GO:0009739">
    <property type="term" value="P:response to gibberellin"/>
    <property type="evidence" value="ECO:0000270"/>
    <property type="project" value="UniProtKB"/>
</dbReference>
<dbReference type="GO" id="GO:0009751">
    <property type="term" value="P:response to salicylic acid"/>
    <property type="evidence" value="ECO:0000270"/>
    <property type="project" value="UniProtKB"/>
</dbReference>
<dbReference type="GO" id="GO:0009651">
    <property type="term" value="P:response to salt stress"/>
    <property type="evidence" value="ECO:0000270"/>
    <property type="project" value="UniProtKB"/>
</dbReference>
<dbReference type="GO" id="GO:0009414">
    <property type="term" value="P:response to water deprivation"/>
    <property type="evidence" value="ECO:0000315"/>
    <property type="project" value="UniProtKB"/>
</dbReference>
<dbReference type="GO" id="GO:0016123">
    <property type="term" value="P:xanthophyll biosynthetic process"/>
    <property type="evidence" value="ECO:0000315"/>
    <property type="project" value="UniProtKB"/>
</dbReference>
<dbReference type="InterPro" id="IPR004294">
    <property type="entry name" value="Carotenoid_Oase"/>
</dbReference>
<dbReference type="PANTHER" id="PTHR10543:SF26">
    <property type="entry name" value="9-CIS-EPOXYCAROTENOID DIOXYGENASE NCED3, CHLOROPLASTIC"/>
    <property type="match status" value="1"/>
</dbReference>
<dbReference type="PANTHER" id="PTHR10543">
    <property type="entry name" value="BETA-CAROTENE DIOXYGENASE"/>
    <property type="match status" value="1"/>
</dbReference>
<dbReference type="Pfam" id="PF03055">
    <property type="entry name" value="RPE65"/>
    <property type="match status" value="1"/>
</dbReference>
<organism>
    <name type="scientific">Solanum lycopersicum</name>
    <name type="common">Tomato</name>
    <name type="synonym">Lycopersicon esculentum</name>
    <dbReference type="NCBI Taxonomy" id="4081"/>
    <lineage>
        <taxon>Eukaryota</taxon>
        <taxon>Viridiplantae</taxon>
        <taxon>Streptophyta</taxon>
        <taxon>Embryophyta</taxon>
        <taxon>Tracheophyta</taxon>
        <taxon>Spermatophyta</taxon>
        <taxon>Magnoliopsida</taxon>
        <taxon>eudicotyledons</taxon>
        <taxon>Gunneridae</taxon>
        <taxon>Pentapetalae</taxon>
        <taxon>asterids</taxon>
        <taxon>lamiids</taxon>
        <taxon>Solanales</taxon>
        <taxon>Solanaceae</taxon>
        <taxon>Solanoideae</taxon>
        <taxon>Solaneae</taxon>
        <taxon>Solanum</taxon>
        <taxon>Solanum subgen. Lycopersicon</taxon>
    </lineage>
</organism>
<feature type="transit peptide" description="Chloroplast" evidence="3">
    <location>
        <begin position="1"/>
        <end position="16"/>
    </location>
</feature>
<feature type="chain" id="PRO_0000445687" description="9-cis-epoxycarotenoid dioxygenase NCED1, chloroplastic">
    <location>
        <begin position="17"/>
        <end position="605"/>
    </location>
</feature>
<feature type="region of interest" description="Disordered" evidence="4">
    <location>
        <begin position="55"/>
        <end position="89"/>
    </location>
</feature>
<feature type="compositionally biased region" description="Polar residues" evidence="4">
    <location>
        <begin position="60"/>
        <end position="75"/>
    </location>
</feature>
<feature type="compositionally biased region" description="Low complexity" evidence="4">
    <location>
        <begin position="80"/>
        <end position="89"/>
    </location>
</feature>
<feature type="binding site" evidence="1">
    <location>
        <position position="302"/>
    </location>
    <ligand>
        <name>Fe cation</name>
        <dbReference type="ChEBI" id="CHEBI:24875"/>
    </ligand>
</feature>
<feature type="binding site" evidence="1">
    <location>
        <position position="351"/>
    </location>
    <ligand>
        <name>Fe cation</name>
        <dbReference type="ChEBI" id="CHEBI:24875"/>
    </ligand>
</feature>
<feature type="binding site" evidence="1">
    <location>
        <position position="416"/>
    </location>
    <ligand>
        <name>Fe cation</name>
        <dbReference type="ChEBI" id="CHEBI:24875"/>
    </ligand>
</feature>
<feature type="binding site" evidence="1">
    <location>
        <position position="592"/>
    </location>
    <ligand>
        <name>Fe cation</name>
        <dbReference type="ChEBI" id="CHEBI:24875"/>
    </ligand>
</feature>
<comment type="function">
    <text evidence="5 7 8 9 10 13">Has a 11,12(11',12') 9-cis epoxycarotenoid cleavage activity. Catalyzes the first step of abscisic-acid (ABA) biosynthesis from carotenoids. Required for ABA accumulation upon drought (Ref.2). Required for ABA-mediated regulation of anther/pollen development, including metabolism, cell wall modification and transcription level (PubMed:29632966). Positive regulator of fruit ripening involved in the biosynthesis of abscisic acid (ABA); initiates ABA biosynthesis at the onset of fruit ripening (PubMed:19246595, PubMed:22108525, PubMed:25039074). Modulates the degree of pigmentation and carotenoid composition as well as pectin catabolism during ripening and may regulate the ethylene production and action in climacteric tomato fruit (PubMed:22108525, PubMed:22345638).</text>
</comment>
<comment type="catalytic activity">
    <reaction evidence="2">
        <text>a 9-cis-epoxycarotenoid + O2 = a 12'-apo-carotenal + 2-cis,4-trans-xanthoxin</text>
        <dbReference type="Rhea" id="RHEA:23328"/>
        <dbReference type="ChEBI" id="CHEBI:15379"/>
        <dbReference type="ChEBI" id="CHEBI:32304"/>
        <dbReference type="ChEBI" id="CHEBI:51972"/>
        <dbReference type="ChEBI" id="CHEBI:51973"/>
        <dbReference type="EC" id="1.13.11.51"/>
    </reaction>
</comment>
<comment type="catalytic activity">
    <reaction evidence="2">
        <text>9-cis-violaxanthin + O2 = (3S,5R,6S)-5,6-epoxy-3-hydroxy-5,6-dihydro-12'-apo-beta-caroten-12'-al + 2-cis,4-trans-xanthoxin</text>
        <dbReference type="Rhea" id="RHEA:16541"/>
        <dbReference type="ChEBI" id="CHEBI:15379"/>
        <dbReference type="ChEBI" id="CHEBI:32304"/>
        <dbReference type="ChEBI" id="CHEBI:34597"/>
        <dbReference type="ChEBI" id="CHEBI:35305"/>
        <dbReference type="EC" id="1.13.11.51"/>
    </reaction>
</comment>
<comment type="catalytic activity">
    <reaction evidence="2">
        <text>9'-cis-neoxanthin + O2 = (3S,5R,6R)-3,5-dihydroxy-6,7-didehydro-5,6-dihydro-12'-apo-beta-caroten-12'-al + 2-cis,4-trans-xanthoxin</text>
        <dbReference type="Rhea" id="RHEA:19677"/>
        <dbReference type="ChEBI" id="CHEBI:15379"/>
        <dbReference type="ChEBI" id="CHEBI:32304"/>
        <dbReference type="ChEBI" id="CHEBI:34596"/>
        <dbReference type="ChEBI" id="CHEBI:35306"/>
        <dbReference type="EC" id="1.13.11.51"/>
    </reaction>
</comment>
<comment type="cofactor">
    <cofactor evidence="1">
        <name>Fe(2+)</name>
        <dbReference type="ChEBI" id="CHEBI:29033"/>
    </cofactor>
    <text evidence="1">Binds 1 Fe(2+) ion per subunit.</text>
</comment>
<comment type="pathway">
    <text evidence="13">Plant hormone biosynthesis; abscisate biosynthesis.</text>
</comment>
<comment type="subcellular location">
    <subcellularLocation>
        <location evidence="2">Plastid</location>
        <location evidence="2">Chloroplast stroma</location>
    </subcellularLocation>
    <text evidence="2">Partially bound to the thylakoid.</text>
</comment>
<comment type="tissue specificity">
    <text evidence="6 7 8 9 10">Expressed in developing and ripening fruits (PubMed:22108525, PubMed:22345638). Highly expressed in pulp (PubMed:25039074). Observed in unpollinated ovaries (e.g. ovules, placenta and pericarp) (PubMed:19322584). Expressed in flowers (PubMed:29632966).</text>
</comment>
<comment type="developmental stage">
    <text evidence="5 6 7 8 9 10">Expressed in the meristem during gametogenesis and mainly in ovule, stigma, anther/pollen and vascular tissues during flower development. In flower buds, present in petal primordium and apical meristem. Later expressed in stamen primordium and pistil meristem after petal formation. Accumulates in stamen, pistil and vascular tissues of the bud base. Highly expressed in sporogenous cells in anther, pistil stigma, ovules, pollen grains, anther walls, and basal vascular bundle. In anthers, first present at low levels, then increases rapidly to reach a peak at stages 13-14 (when microspores transform into vacuolated pollen grains after mitotic divisions) before declines gradually (PubMed:29632966). In fruits, levels decline from the immature stage to the mature green stage and then rapidly increase to a peak at the turning stage (PubMed:22108525, PubMed:22345638, PubMed:25039074). Highly expressed in fruits at the onset of ripening when the abscisic-acid (ABA) content becomes high (PubMed:19246595, PubMed:22108525, PubMed:22345638). Progressive level reduction in ovaries (e.g. ovules, placenta and pericarp) after pollination (PubMed:19322584).</text>
</comment>
<comment type="induction">
    <text evidence="5 6 9 11 12 13">Induced by drought (PubMed:25039074, Ref.1, Ref.2). Accumulates in dehydration-treated fruits (PubMed:19246595). Repressed after pollination. Inhibited by gibberellic acid (GA(3)) and auxin (4-Cl-IAA) treatments (PubMed:19322584). Induced by abscisic acid (ABA) (PubMed:19322584, PubMed:25039074). Up-regulated by salicylic acid (SA) in roots; this accumulation is repressed by salt stress (NaCl) with high SA treatment but with low SA (PubMed:25039074). Regulated by the NAC transcription factor NAP2 (PubMed:29760199).</text>
</comment>
<comment type="disruption phenotype">
    <text evidence="7 8 9 10 13">The mutant notabilis (not) is abscisic acid (ABA)-deficient (including in response to dehydration) and exhibits a reduced growth and lower ethylene levels (Ref.2). Abnormal development of anther/pollen leading to serious pollen deterioration (PubMed:29632966). Fruit-specific suppression leads to reduced ABA accumulation resulting in an increase in ethylene levels, by increasing the transcription of genes related to the synthesis of ethylene during ripening. Deep red fruits which accumulate higher levels of lycopene and beta-carotene probably due to the metabolism of 'backlogged' carbon as a result of disturbed ABA signaling (PubMed:22345638). When disrupted in fruits, altered expression of genes involved in ABA metabolism and signaling and disturbed expression of pectin catabolism family genes are observed (PubMed:22108525, PubMed:25039074). In addition, fruits are smaller, but in a slightly higher number, with a longer shelf life; they are firmer and more flexible during the ripening stages after the mature green stage with considerably fewer seeds, greater viscosity of juices, higher ethylene release and a deep red color (PubMed:22108525). Silenced plants fruits have a slow/suppressed ripening with abnormal orange color and associated with lower ABA levels. In fruits exposed to water deprivation, water loss of the sepal is enhanced (PubMed:25039074).</text>
</comment>
<comment type="biotechnology">
    <text evidence="7">Interfering with NCED1 expression in fruits increases shelf life and reduces seed number, but increases viscosity of juices and modifies fruit texture.</text>
</comment>
<comment type="similarity">
    <text evidence="17">Belongs to the carotenoid oxygenase family.</text>
</comment>
<sequence>MATTTSHATNTWIKTKLSMPSSKEFGFASNSISLLKNQHNRQSLNINSSLQAPPILHFPKQSSNYQTPKNNTISHPKQENNNSSSSSTSKWNLVQKAAAMALDAVESALTKHELEHPLPKTADPRVQISGNFAPVPENPVCQSLPVTGKIPKCVQGVYVRNGANPLFEPTAGHHFFDGDGMVHAVQFKNGSASYACRFTETERLVQEKALGRPVFPKAIGELHGHSGIARLMLFYARGLFGLVDHSKGTGVANAGLVYFNNRLLAMSEDDLPYHVKVTPTGDLKTEGRFDFDGQLKSTMIAHPKLDPVSGELFALSYDVIQKPYLKYFRFSKNGEKSNDVEIPVEDPTMMHDFAITENFVVIPDQQVVFKMSEMIRGGSPVVYDKNKVSRFGILDKYAKDGSDLKWVEVPDCFCFHLWNAWEEAETDEIVVIGSCMTPPDSIFNECDEGLKSVLSEIRLNLKTGKSTRKSIIENPDEQVNLEAGMVNRNKLGRKTEYAYLAIAEPWPKVSGFAKVNLFTGEVEKFIYGDNKYGGEPLFLPRDPNSKEEDDGYILAFVHDEKEWKSELQIVNAMSLKLEATVKLPSRVPYGFHGTFINANDLANQA</sequence>
<evidence type="ECO:0000250" key="1">
    <source>
        <dbReference type="UniProtKB" id="O24592"/>
    </source>
</evidence>
<evidence type="ECO:0000250" key="2">
    <source>
        <dbReference type="UniProtKB" id="Q9LRR7"/>
    </source>
</evidence>
<evidence type="ECO:0000255" key="3"/>
<evidence type="ECO:0000256" key="4">
    <source>
        <dbReference type="SAM" id="MobiDB-lite"/>
    </source>
</evidence>
<evidence type="ECO:0000269" key="5">
    <source>
    </source>
</evidence>
<evidence type="ECO:0000269" key="6">
    <source>
    </source>
</evidence>
<evidence type="ECO:0000269" key="7">
    <source>
    </source>
</evidence>
<evidence type="ECO:0000269" key="8">
    <source>
    </source>
</evidence>
<evidence type="ECO:0000269" key="9">
    <source>
    </source>
</evidence>
<evidence type="ECO:0000269" key="10">
    <source>
    </source>
</evidence>
<evidence type="ECO:0000269" key="11">
    <source>
    </source>
</evidence>
<evidence type="ECO:0000269" key="12">
    <source ref="1"/>
</evidence>
<evidence type="ECO:0000269" key="13">
    <source ref="2"/>
</evidence>
<evidence type="ECO:0000303" key="14">
    <source>
    </source>
</evidence>
<evidence type="ECO:0000303" key="15">
    <source ref="1"/>
</evidence>
<evidence type="ECO:0000303" key="16">
    <source ref="2"/>
</evidence>
<evidence type="ECO:0000305" key="17"/>
<reference key="1">
    <citation type="journal article" date="1997" name="J. Exp. Bot.">
        <title>Structure and expression of a cDNA encoding a putative neoxanthin cleavage enzyme (NCE) isolated from a wilt-related tomato (Lycopersicon esculentum Mill.) library.</title>
        <authorList>
            <person name="Burbidge A."/>
            <person name="Grieve T.M."/>
            <person name="Jackson A."/>
            <person name="Thompson A."/>
            <person name="Taylor I.B."/>
        </authorList>
    </citation>
    <scope>NUCLEOTIDE SEQUENCE [MRNA]</scope>
    <scope>INDUCTION BY DROUGHT</scope>
</reference>
<reference key="2">
    <citation type="journal article" date="2004" name="Plant Cell Environ.">
        <title>Complementation of notabilis, an abscisic acid-deficient mutant of tomato: importance of sequence context and utility of partial complementation.</title>
        <authorList>
            <person name="Thompson A.J."/>
            <person name="Thorne E.T."/>
            <person name="Burbridge A."/>
            <person name="Jackson A.C."/>
            <person name="Sharp R.E."/>
            <person name="Taylor I.B."/>
        </authorList>
    </citation>
    <scope>NUCLEOTIDE SEQUENCE [GENOMIC DNA]</scope>
    <scope>FUNCTION</scope>
    <scope>DISRUPTION PHENOTYPE</scope>
    <scope>PATHWAY</scope>
    <scope>INDUCTION BY DROUGHT</scope>
    <source>
        <strain>cv. Moneymaker</strain>
    </source>
</reference>
<reference key="3">
    <citation type="journal article" date="2012" name="Nature">
        <title>The tomato genome sequence provides insights into fleshy fruit evolution.</title>
        <authorList>
            <consortium name="Tomato Genome Consortium"/>
        </authorList>
    </citation>
    <scope>NUCLEOTIDE SEQUENCE [LARGE SCALE GENOMIC DNA]</scope>
    <source>
        <strain>cv. Heinz 1706</strain>
    </source>
</reference>
<reference key="4">
    <citation type="journal article" date="2009" name="J. Exp. Bot.">
        <title>The role of ABA in triggering ethylene biosynthesis and ripening of tomato fruit.</title>
        <authorList>
            <person name="Zhang M."/>
            <person name="Yuan B."/>
            <person name="Leng P."/>
        </authorList>
    </citation>
    <scope>FUNCTION</scope>
    <scope>DEVELOPMENTAL STAGE</scope>
    <scope>INDUCTION BY DEHYDRATION</scope>
    <source>
        <strain>cv. Ailsa Craig</strain>
        <tissue>Fruit</tissue>
    </source>
</reference>
<reference key="5">
    <citation type="journal article" date="2009" name="Planta">
        <title>Abscisic acid levels in tomato ovaries are regulated by LeNCED1 and SlCYP707A1.</title>
        <authorList>
            <person name="Nitsch L.M."/>
            <person name="Oplaat C."/>
            <person name="Feron R."/>
            <person name="Ma Q."/>
            <person name="Wolters-Arts M."/>
            <person name="Hedden P."/>
            <person name="Mariani C."/>
            <person name="Vriezen W.H."/>
        </authorList>
    </citation>
    <scope>DEVELOPMENTAL STAGE</scope>
    <scope>TISSUE SPECIFICITY</scope>
    <scope>REPRESSION BY POLLINATION; AUXIN AND GIBBERELLIC ACID</scope>
    <scope>INDUCTION BY ABSCISIC ACID</scope>
    <source>
        <strain>cv. Moneymaker</strain>
    </source>
</reference>
<reference key="6">
    <citation type="journal article" date="2012" name="J. Exp. Bot.">
        <title>Fruit-specific RNAi-mediated suppression of SlNCED1 increases both lycopene and beta-carotene contents in tomato fruit.</title>
        <authorList>
            <person name="Sun L."/>
            <person name="Yuan B."/>
            <person name="Zhang M."/>
            <person name="Wang L."/>
            <person name="Cui M."/>
            <person name="Wang Q."/>
            <person name="Leng P."/>
        </authorList>
    </citation>
    <scope>FUNCTION</scope>
    <scope>DISRUPTION PHENOTYPE</scope>
    <scope>TISSUE SPECIFICITY</scope>
    <scope>DEVELOPMENTAL STAGE</scope>
    <source>
        <strain>cv. Jia Bao</strain>
    </source>
</reference>
<reference key="7">
    <citation type="journal article" date="2012" name="Plant Physiol.">
        <title>Suppression of 9-cis-epoxycarotenoid dioxygenase, which encodes a key enzyme in abscisic acid biosynthesis, alters fruit texture in transgenic tomato.</title>
        <authorList>
            <person name="Sun L."/>
            <person name="Sun Y."/>
            <person name="Zhang M."/>
            <person name="Wang L."/>
            <person name="Ren J."/>
            <person name="Cui M."/>
            <person name="Wang Y."/>
            <person name="Ji K."/>
            <person name="Li P."/>
            <person name="Li Q."/>
            <person name="Chen P."/>
            <person name="Dai S."/>
            <person name="Duan C."/>
            <person name="Wu Y."/>
            <person name="Leng P."/>
        </authorList>
    </citation>
    <scope>FUNCTION</scope>
    <scope>DISRUPTION PHENOTYPE</scope>
    <scope>BIOTECHNOLOGY</scope>
    <scope>DEVELOPMENTAL STAGE</scope>
    <scope>TISSUE SPECIFICITY</scope>
    <source>
        <strain>cv. Jia Bao</strain>
    </source>
</reference>
<reference key="8">
    <citation type="journal article" date="2014" name="J. Exp. Bot.">
        <title>SlNCED1 and SlCYP707A2: key genes involved in ABA metabolism during tomato fruit ripening.</title>
        <authorList>
            <person name="Ji K."/>
            <person name="Kai W."/>
            <person name="Zhao B."/>
            <person name="Sun Y."/>
            <person name="Yuan B."/>
            <person name="Dai S."/>
            <person name="Li Q."/>
            <person name="Chen P."/>
            <person name="Wang Y."/>
            <person name="Pei Y."/>
            <person name="Wang H."/>
            <person name="Guo Y."/>
            <person name="Leng P."/>
        </authorList>
    </citation>
    <scope>FUNCTION</scope>
    <scope>DISRUPTION PHENOTYPE</scope>
    <scope>TISSUE SPECIFICITY</scope>
    <scope>INDUCTION BY ABSCISIC ACID AND DEHYDRATION</scope>
    <scope>DEVELOPMENTAL STAGE</scope>
    <source>
        <strain>cv. Jia Bao</strain>
    </source>
</reference>
<reference key="9">
    <citation type="journal article" date="2015" name="J. Plant Physiol.">
        <title>Hardening with salicylic acid induces concentration-dependent changes in abscisic acid biosynthesis of tomato under salt stress.</title>
        <authorList>
            <person name="Horvath E."/>
            <person name="Csiszar J."/>
            <person name="Galle A."/>
            <person name="Poor P."/>
            <person name="Szepesi A."/>
            <person name="Tari I."/>
        </authorList>
    </citation>
    <scope>INDUCTION BY SALICYLIC ACID</scope>
    <source>
        <strain>cv. Rio Fuego</strain>
    </source>
</reference>
<reference key="10">
    <citation type="journal article" date="2018" name="Cell. Mol. Life Sci.">
        <title>The functional analysis of SlNCED1 in tomato pollen development.</title>
        <authorList>
            <person name="Dai S."/>
            <person name="Kai W."/>
            <person name="Liang B."/>
            <person name="Wang J."/>
            <person name="Jiang L."/>
            <person name="Du Y."/>
            <person name="Sun Y."/>
            <person name="Leng P."/>
        </authorList>
    </citation>
    <scope>FUNCTION</scope>
    <scope>DISRUPTION PHENOTYPE</scope>
    <scope>TISSUE SPECIFICITY</scope>
    <scope>DEVELOPMENTAL STAGE</scope>
    <source>
        <strain>cv. Jia Bao</strain>
    </source>
</reference>
<reference key="11">
    <citation type="journal article" date="2018" name="Plant Physiol.">
        <title>The NAC transcription factor SlNAP2 regulates leaf senescence and fruit yield in tomato.</title>
        <authorList>
            <person name="Ma X."/>
            <person name="Zhang Y."/>
            <person name="Tureckova V."/>
            <person name="Xue G.-P."/>
            <person name="Fernie A.R."/>
            <person name="Mueller-Roeber B."/>
            <person name="Balazadeh S."/>
        </authorList>
    </citation>
    <scope>INDUCTION BY NAP2</scope>
</reference>